<protein>
    <recommendedName>
        <fullName>Suppressor of tumorigenicity 7 protein</fullName>
    </recommendedName>
</protein>
<accession>Q2IBA8</accession>
<keyword id="KW-0325">Glycoprotein</keyword>
<keyword id="KW-0472">Membrane</keyword>
<keyword id="KW-0597">Phosphoprotein</keyword>
<keyword id="KW-0812">Transmembrane</keyword>
<keyword id="KW-1133">Transmembrane helix</keyword>
<dbReference type="EMBL" id="DP000029">
    <property type="protein sequence ID" value="ABC87488.1"/>
    <property type="molecule type" value="Genomic_DNA"/>
</dbReference>
<dbReference type="GlyCosmos" id="Q2IBA8">
    <property type="glycosylation" value="1 site, No reported glycans"/>
</dbReference>
<dbReference type="GO" id="GO:0016020">
    <property type="term" value="C:membrane"/>
    <property type="evidence" value="ECO:0007669"/>
    <property type="project" value="UniProtKB-SubCell"/>
</dbReference>
<dbReference type="CDD" id="cd11557">
    <property type="entry name" value="ST7"/>
    <property type="match status" value="1"/>
</dbReference>
<dbReference type="InterPro" id="IPR007311">
    <property type="entry name" value="ST7"/>
</dbReference>
<dbReference type="PANTHER" id="PTHR12745">
    <property type="entry name" value="SUPPRESSION OF TUMORIGENICITY 7"/>
    <property type="match status" value="1"/>
</dbReference>
<dbReference type="PANTHER" id="PTHR12745:SF10">
    <property type="entry name" value="SUPPRESSOR OF TUMORIGENICITY 7 PROTEIN"/>
    <property type="match status" value="1"/>
</dbReference>
<dbReference type="Pfam" id="PF04184">
    <property type="entry name" value="ST7"/>
    <property type="match status" value="1"/>
</dbReference>
<feature type="chain" id="PRO_0000339196" description="Suppressor of tumorigenicity 7 protein">
    <location>
        <begin position="1"/>
        <end position="585"/>
    </location>
</feature>
<feature type="transmembrane region" description="Helical" evidence="2">
    <location>
        <begin position="15"/>
        <end position="35"/>
    </location>
</feature>
<feature type="transmembrane region" description="Helical" evidence="2">
    <location>
        <begin position="62"/>
        <end position="82"/>
    </location>
</feature>
<feature type="transmembrane region" description="Helical" evidence="2">
    <location>
        <begin position="512"/>
        <end position="532"/>
    </location>
</feature>
<feature type="modified residue" description="Phosphoserine" evidence="1">
    <location>
        <position position="386"/>
    </location>
</feature>
<feature type="glycosylation site" description="N-linked (GlcNAc...) asparagine" evidence="2">
    <location>
        <position position="47"/>
    </location>
</feature>
<reference key="1">
    <citation type="submission" date="2006-01" db="EMBL/GenBank/DDBJ databases">
        <title>NISC comparative sequencing initiative.</title>
        <authorList>
            <person name="Antonellis A."/>
            <person name="Ayele K."/>
            <person name="Benjamin B."/>
            <person name="Blakesley R.W."/>
            <person name="Boakye A."/>
            <person name="Bouffard G.G."/>
            <person name="Brinkley C."/>
            <person name="Brooks S."/>
            <person name="Chu G."/>
            <person name="Coleman H."/>
            <person name="Engle J."/>
            <person name="Gestole M."/>
            <person name="Greene A."/>
            <person name="Guan X."/>
            <person name="Gupta J."/>
            <person name="Haghighi P."/>
            <person name="Han J."/>
            <person name="Hansen N."/>
            <person name="Ho S.-L."/>
            <person name="Hu P."/>
            <person name="Hunter G."/>
            <person name="Hurle B."/>
            <person name="Idol J.R."/>
            <person name="Kwong P."/>
            <person name="Laric P."/>
            <person name="Larson S."/>
            <person name="Lee-Lin S.-Q."/>
            <person name="Legaspi R."/>
            <person name="Madden M."/>
            <person name="Maduro Q.L."/>
            <person name="Maduro V.B."/>
            <person name="Margulies E.H."/>
            <person name="Masiello C."/>
            <person name="Maskeri B."/>
            <person name="McDowell J."/>
            <person name="Mojidi H.A."/>
            <person name="Mullikin J.C."/>
            <person name="Oestreicher J.S."/>
            <person name="Park M."/>
            <person name="Portnoy M.E."/>
            <person name="Prasad A."/>
            <person name="Puri O."/>
            <person name="Reddix-Dugue N."/>
            <person name="Schandler K."/>
            <person name="Schueler M.G."/>
            <person name="Sison C."/>
            <person name="Stantripop S."/>
            <person name="Stephen E."/>
            <person name="Taye A."/>
            <person name="Thomas J.W."/>
            <person name="Thomas P.J."/>
            <person name="Tsipouri V."/>
            <person name="Ung L."/>
            <person name="Vogt J.L."/>
            <person name="Wetherby K.D."/>
            <person name="Young A."/>
            <person name="Green E.D."/>
        </authorList>
    </citation>
    <scope>NUCLEOTIDE SEQUENCE [LARGE SCALE GENOMIC DNA]</scope>
</reference>
<comment type="subcellular location">
    <subcellularLocation>
        <location evidence="3">Membrane</location>
        <topology evidence="3">Multi-pass membrane protein</topology>
    </subcellularLocation>
</comment>
<comment type="similarity">
    <text evidence="3">Belongs to the ST7 family.</text>
</comment>
<proteinExistence type="inferred from homology"/>
<name>ST7_CHLAE</name>
<sequence length="585" mass="67140">MAEAATGFLEQLKSCIVWSWTYLWTVWFFIVLFLVYILRVPLKINDNLSTVSMFLNTLTPKFYVALTGTSSLISGLILIFEWWYFRKYGTSFIEQVSVSHLRPLLGGVDNNSSNNSNSSNGDSDSNRQSVSECKVWRNPLNLFRGAEYNRYTWVTGREPLTYYDMNLSAQDHQTFFTCDSDHLRPADAIMQKAWRERNPQARISAAHEALEINEIRSRVEVPLIASSTIWEIKLLPKCATAYILLAEEEATTIAEAEKLFKQALKAGDGCYRRSQQLQHHGSQYEAQHRRDTNVLVYIKRRLAMCARRLGRTREAVKMMRDLMKEFPLLSMFNIHENLLEALLELQAYADVQAVLAKYDDISLPKSATICYTAALLKARAVSDKFSPEAASRRGLSTAEMNAVEAIHRAVEFNPHVPKYLLEMKSLILPPEHILKRGDSEAIAYAFFHLAHWKRVEGALNLLHCTWEGTFRMIPYPLEKGHLFYPYPICTETADRELLPSFHEVSVYPKKELPFFILFTAGLCSFTAMLALLTHQFPELMGVFAKAMSDIFCSAEFRDWNCKSIFMRVEDELEIPPAPQSQHFQN</sequence>
<organism>
    <name type="scientific">Chlorocebus aethiops</name>
    <name type="common">Green monkey</name>
    <name type="synonym">Cercopithecus aethiops</name>
    <dbReference type="NCBI Taxonomy" id="9534"/>
    <lineage>
        <taxon>Eukaryota</taxon>
        <taxon>Metazoa</taxon>
        <taxon>Chordata</taxon>
        <taxon>Craniata</taxon>
        <taxon>Vertebrata</taxon>
        <taxon>Euteleostomi</taxon>
        <taxon>Mammalia</taxon>
        <taxon>Eutheria</taxon>
        <taxon>Euarchontoglires</taxon>
        <taxon>Primates</taxon>
        <taxon>Haplorrhini</taxon>
        <taxon>Catarrhini</taxon>
        <taxon>Cercopithecidae</taxon>
        <taxon>Cercopithecinae</taxon>
        <taxon>Chlorocebus</taxon>
    </lineage>
</organism>
<evidence type="ECO:0000250" key="1">
    <source>
        <dbReference type="UniProtKB" id="Q9NRC1"/>
    </source>
</evidence>
<evidence type="ECO:0000255" key="2"/>
<evidence type="ECO:0000305" key="3"/>
<gene>
    <name type="primary">ST7</name>
</gene>